<protein>
    <recommendedName>
        <fullName evidence="1">Glutaminase</fullName>
        <ecNumber evidence="1">3.5.1.2</ecNumber>
    </recommendedName>
</protein>
<name>GLSA_RHILO</name>
<keyword id="KW-0378">Hydrolase</keyword>
<evidence type="ECO:0000255" key="1">
    <source>
        <dbReference type="HAMAP-Rule" id="MF_00313"/>
    </source>
</evidence>
<reference key="1">
    <citation type="journal article" date="2000" name="DNA Res.">
        <title>Complete genome structure of the nitrogen-fixing symbiotic bacterium Mesorhizobium loti.</title>
        <authorList>
            <person name="Kaneko T."/>
            <person name="Nakamura Y."/>
            <person name="Sato S."/>
            <person name="Asamizu E."/>
            <person name="Kato T."/>
            <person name="Sasamoto S."/>
            <person name="Watanabe A."/>
            <person name="Idesawa K."/>
            <person name="Ishikawa A."/>
            <person name="Kawashima K."/>
            <person name="Kimura T."/>
            <person name="Kishida Y."/>
            <person name="Kiyokawa C."/>
            <person name="Kohara M."/>
            <person name="Matsumoto M."/>
            <person name="Matsuno A."/>
            <person name="Mochizuki Y."/>
            <person name="Nakayama S."/>
            <person name="Nakazaki N."/>
            <person name="Shimpo S."/>
            <person name="Sugimoto M."/>
            <person name="Takeuchi C."/>
            <person name="Yamada M."/>
            <person name="Tabata S."/>
        </authorList>
    </citation>
    <scope>NUCLEOTIDE SEQUENCE [LARGE SCALE GENOMIC DNA]</scope>
    <source>
        <strain>LMG 29417 / CECT 9101 / MAFF 303099</strain>
    </source>
</reference>
<comment type="catalytic activity">
    <reaction evidence="1">
        <text>L-glutamine + H2O = L-glutamate + NH4(+)</text>
        <dbReference type="Rhea" id="RHEA:15889"/>
        <dbReference type="ChEBI" id="CHEBI:15377"/>
        <dbReference type="ChEBI" id="CHEBI:28938"/>
        <dbReference type="ChEBI" id="CHEBI:29985"/>
        <dbReference type="ChEBI" id="CHEBI:58359"/>
        <dbReference type="EC" id="3.5.1.2"/>
    </reaction>
</comment>
<comment type="subunit">
    <text evidence="1">Homotetramer.</text>
</comment>
<comment type="similarity">
    <text evidence="1">Belongs to the glutaminase family.</text>
</comment>
<sequence>MPELERAPKLDQALAEVAAEMAERTDRGDVATYIPQLGKVDPRKFGIAAVTNDGRVLVAGDADQAFSIQSISKVFTLTLALGNVGDALWQRVGREPSGNPFNSIVQLEHENGIPRNPFINAGAIVISDILLAGHQPREAIGEILRFIQFLADDDTIIIDREVAASERATGYRNFALANYMKSFGNLHHAPELALGVYFHHCAIAMSCRQLAMAGRFLANGGKNPATGHSVVSAERARRIGAMMLTCGHYDGSGDFAFRVGIPGKSGVGGGILGIVPGVASLAVWSPGLNANGNSKLGSIALEKLARMMNWSIFAP</sequence>
<feature type="chain" id="PRO_0000110620" description="Glutaminase">
    <location>
        <begin position="1"/>
        <end position="315"/>
    </location>
</feature>
<feature type="binding site" evidence="1">
    <location>
        <position position="70"/>
    </location>
    <ligand>
        <name>substrate</name>
    </ligand>
</feature>
<feature type="binding site" evidence="1">
    <location>
        <position position="120"/>
    </location>
    <ligand>
        <name>substrate</name>
    </ligand>
</feature>
<feature type="binding site" evidence="1">
    <location>
        <position position="166"/>
    </location>
    <ligand>
        <name>substrate</name>
    </ligand>
</feature>
<feature type="binding site" evidence="1">
    <location>
        <position position="173"/>
    </location>
    <ligand>
        <name>substrate</name>
    </ligand>
</feature>
<feature type="binding site" evidence="1">
    <location>
        <position position="197"/>
    </location>
    <ligand>
        <name>substrate</name>
    </ligand>
</feature>
<feature type="binding site" evidence="1">
    <location>
        <position position="249"/>
    </location>
    <ligand>
        <name>substrate</name>
    </ligand>
</feature>
<feature type="binding site" evidence="1">
    <location>
        <position position="267"/>
    </location>
    <ligand>
        <name>substrate</name>
    </ligand>
</feature>
<organism>
    <name type="scientific">Mesorhizobium japonicum (strain LMG 29417 / CECT 9101 / MAFF 303099)</name>
    <name type="common">Mesorhizobium loti (strain MAFF 303099)</name>
    <dbReference type="NCBI Taxonomy" id="266835"/>
    <lineage>
        <taxon>Bacteria</taxon>
        <taxon>Pseudomonadati</taxon>
        <taxon>Pseudomonadota</taxon>
        <taxon>Alphaproteobacteria</taxon>
        <taxon>Hyphomicrobiales</taxon>
        <taxon>Phyllobacteriaceae</taxon>
        <taxon>Mesorhizobium</taxon>
    </lineage>
</organism>
<dbReference type="EC" id="3.5.1.2" evidence="1"/>
<dbReference type="EMBL" id="BA000012">
    <property type="protein sequence ID" value="BAB47844.1"/>
    <property type="molecule type" value="Genomic_DNA"/>
</dbReference>
<dbReference type="RefSeq" id="WP_010909214.1">
    <property type="nucleotide sequence ID" value="NC_002678.2"/>
</dbReference>
<dbReference type="SMR" id="Q98NB7"/>
<dbReference type="KEGG" id="mlo:mlr0211"/>
<dbReference type="PATRIC" id="fig|266835.9.peg.164"/>
<dbReference type="eggNOG" id="COG2066">
    <property type="taxonomic scope" value="Bacteria"/>
</dbReference>
<dbReference type="HOGENOM" id="CLU_027932_1_1_5"/>
<dbReference type="Proteomes" id="UP000000552">
    <property type="component" value="Chromosome"/>
</dbReference>
<dbReference type="GO" id="GO:0004359">
    <property type="term" value="F:glutaminase activity"/>
    <property type="evidence" value="ECO:0007669"/>
    <property type="project" value="UniProtKB-UniRule"/>
</dbReference>
<dbReference type="GO" id="GO:0006537">
    <property type="term" value="P:glutamate biosynthetic process"/>
    <property type="evidence" value="ECO:0007669"/>
    <property type="project" value="TreeGrafter"/>
</dbReference>
<dbReference type="GO" id="GO:0006543">
    <property type="term" value="P:glutamine catabolic process"/>
    <property type="evidence" value="ECO:0007669"/>
    <property type="project" value="TreeGrafter"/>
</dbReference>
<dbReference type="FunFam" id="3.40.710.10:FF:000005">
    <property type="entry name" value="Glutaminase"/>
    <property type="match status" value="1"/>
</dbReference>
<dbReference type="Gene3D" id="3.40.710.10">
    <property type="entry name" value="DD-peptidase/beta-lactamase superfamily"/>
    <property type="match status" value="1"/>
</dbReference>
<dbReference type="HAMAP" id="MF_00313">
    <property type="entry name" value="Glutaminase"/>
    <property type="match status" value="1"/>
</dbReference>
<dbReference type="InterPro" id="IPR012338">
    <property type="entry name" value="Beta-lactam/transpept-like"/>
</dbReference>
<dbReference type="InterPro" id="IPR015868">
    <property type="entry name" value="Glutaminase"/>
</dbReference>
<dbReference type="NCBIfam" id="TIGR03814">
    <property type="entry name" value="Gln_ase"/>
    <property type="match status" value="1"/>
</dbReference>
<dbReference type="NCBIfam" id="NF002133">
    <property type="entry name" value="PRK00971.1-2"/>
    <property type="match status" value="1"/>
</dbReference>
<dbReference type="PANTHER" id="PTHR12544">
    <property type="entry name" value="GLUTAMINASE"/>
    <property type="match status" value="1"/>
</dbReference>
<dbReference type="PANTHER" id="PTHR12544:SF29">
    <property type="entry name" value="GLUTAMINASE"/>
    <property type="match status" value="1"/>
</dbReference>
<dbReference type="Pfam" id="PF04960">
    <property type="entry name" value="Glutaminase"/>
    <property type="match status" value="1"/>
</dbReference>
<dbReference type="SUPFAM" id="SSF56601">
    <property type="entry name" value="beta-lactamase/transpeptidase-like"/>
    <property type="match status" value="1"/>
</dbReference>
<gene>
    <name evidence="1" type="primary">glsA</name>
    <name type="ordered locus">mlr0211</name>
</gene>
<proteinExistence type="inferred from homology"/>
<accession>Q98NB7</accession>